<comment type="function">
    <text evidence="1">Endonuclease that specifically degrades the RNA of RNA-DNA hybrids.</text>
</comment>
<comment type="catalytic activity">
    <reaction evidence="1">
        <text>Endonucleolytic cleavage to 5'-phosphomonoester.</text>
        <dbReference type="EC" id="3.1.26.4"/>
    </reaction>
</comment>
<comment type="cofactor">
    <cofactor evidence="1">
        <name>Mg(2+)</name>
        <dbReference type="ChEBI" id="CHEBI:18420"/>
    </cofactor>
    <text evidence="1">Binds 1 Mg(2+) ion per subunit. May bind a second metal ion at a regulatory site, or after substrate binding.</text>
</comment>
<comment type="subunit">
    <text evidence="1">Monomer.</text>
</comment>
<comment type="subcellular location">
    <subcellularLocation>
        <location evidence="1">Cytoplasm</location>
    </subcellularLocation>
</comment>
<comment type="similarity">
    <text evidence="1">Belongs to the RNase H family.</text>
</comment>
<accession>Q8UHA7</accession>
<dbReference type="EC" id="3.1.26.4" evidence="1"/>
<dbReference type="EMBL" id="AE007869">
    <property type="protein sequence ID" value="AAK86585.1"/>
    <property type="molecule type" value="Genomic_DNA"/>
</dbReference>
<dbReference type="PIR" id="AB2672">
    <property type="entry name" value="AB2672"/>
</dbReference>
<dbReference type="PIR" id="H97453">
    <property type="entry name" value="H97453"/>
</dbReference>
<dbReference type="RefSeq" id="NP_353800.1">
    <property type="nucleotide sequence ID" value="NC_003062.2"/>
</dbReference>
<dbReference type="RefSeq" id="WP_003511799.1">
    <property type="nucleotide sequence ID" value="NC_003062.2"/>
</dbReference>
<dbReference type="SMR" id="Q8UHA7"/>
<dbReference type="STRING" id="176299.Atu0776"/>
<dbReference type="EnsemblBacteria" id="AAK86585">
    <property type="protein sequence ID" value="AAK86585"/>
    <property type="gene ID" value="Atu0776"/>
</dbReference>
<dbReference type="GeneID" id="92769933"/>
<dbReference type="KEGG" id="atu:Atu0776"/>
<dbReference type="PATRIC" id="fig|176299.10.peg.776"/>
<dbReference type="eggNOG" id="COG0328">
    <property type="taxonomic scope" value="Bacteria"/>
</dbReference>
<dbReference type="HOGENOM" id="CLU_030894_6_0_5"/>
<dbReference type="OrthoDB" id="7845843at2"/>
<dbReference type="PhylomeDB" id="Q8UHA7"/>
<dbReference type="BioCyc" id="AGRO:ATU0776-MONOMER"/>
<dbReference type="Proteomes" id="UP000000813">
    <property type="component" value="Chromosome circular"/>
</dbReference>
<dbReference type="GO" id="GO:0005737">
    <property type="term" value="C:cytoplasm"/>
    <property type="evidence" value="ECO:0007669"/>
    <property type="project" value="UniProtKB-SubCell"/>
</dbReference>
<dbReference type="GO" id="GO:0000287">
    <property type="term" value="F:magnesium ion binding"/>
    <property type="evidence" value="ECO:0007669"/>
    <property type="project" value="UniProtKB-UniRule"/>
</dbReference>
<dbReference type="GO" id="GO:0003676">
    <property type="term" value="F:nucleic acid binding"/>
    <property type="evidence" value="ECO:0007669"/>
    <property type="project" value="InterPro"/>
</dbReference>
<dbReference type="GO" id="GO:0004523">
    <property type="term" value="F:RNA-DNA hybrid ribonuclease activity"/>
    <property type="evidence" value="ECO:0007669"/>
    <property type="project" value="UniProtKB-UniRule"/>
</dbReference>
<dbReference type="GO" id="GO:0043137">
    <property type="term" value="P:DNA replication, removal of RNA primer"/>
    <property type="evidence" value="ECO:0007669"/>
    <property type="project" value="TreeGrafter"/>
</dbReference>
<dbReference type="CDD" id="cd09278">
    <property type="entry name" value="RNase_HI_prokaryote_like"/>
    <property type="match status" value="1"/>
</dbReference>
<dbReference type="FunFam" id="3.30.420.10:FF:000089">
    <property type="entry name" value="Ribonuclease H"/>
    <property type="match status" value="1"/>
</dbReference>
<dbReference type="Gene3D" id="3.30.420.10">
    <property type="entry name" value="Ribonuclease H-like superfamily/Ribonuclease H"/>
    <property type="match status" value="1"/>
</dbReference>
<dbReference type="HAMAP" id="MF_00042">
    <property type="entry name" value="RNase_H"/>
    <property type="match status" value="1"/>
</dbReference>
<dbReference type="InterPro" id="IPR050092">
    <property type="entry name" value="RNase_H"/>
</dbReference>
<dbReference type="InterPro" id="IPR012337">
    <property type="entry name" value="RNaseH-like_sf"/>
</dbReference>
<dbReference type="InterPro" id="IPR002156">
    <property type="entry name" value="RNaseH_domain"/>
</dbReference>
<dbReference type="InterPro" id="IPR036397">
    <property type="entry name" value="RNaseH_sf"/>
</dbReference>
<dbReference type="InterPro" id="IPR022892">
    <property type="entry name" value="RNaseHI"/>
</dbReference>
<dbReference type="NCBIfam" id="NF001236">
    <property type="entry name" value="PRK00203.1"/>
    <property type="match status" value="1"/>
</dbReference>
<dbReference type="PANTHER" id="PTHR10642">
    <property type="entry name" value="RIBONUCLEASE H1"/>
    <property type="match status" value="1"/>
</dbReference>
<dbReference type="PANTHER" id="PTHR10642:SF26">
    <property type="entry name" value="RIBONUCLEASE H1"/>
    <property type="match status" value="1"/>
</dbReference>
<dbReference type="Pfam" id="PF00075">
    <property type="entry name" value="RNase_H"/>
    <property type="match status" value="1"/>
</dbReference>
<dbReference type="SUPFAM" id="SSF53098">
    <property type="entry name" value="Ribonuclease H-like"/>
    <property type="match status" value="1"/>
</dbReference>
<dbReference type="PROSITE" id="PS50879">
    <property type="entry name" value="RNASE_H_1"/>
    <property type="match status" value="1"/>
</dbReference>
<name>RNH_AGRFC</name>
<proteinExistence type="inferred from homology"/>
<feature type="chain" id="PRO_0000195362" description="Ribonuclease H">
    <location>
        <begin position="1"/>
        <end position="146"/>
    </location>
</feature>
<feature type="domain" description="RNase H type-1" evidence="2">
    <location>
        <begin position="1"/>
        <end position="141"/>
    </location>
</feature>
<feature type="region of interest" description="Disordered" evidence="3">
    <location>
        <begin position="123"/>
        <end position="146"/>
    </location>
</feature>
<feature type="compositionally biased region" description="Basic and acidic residues" evidence="3">
    <location>
        <begin position="125"/>
        <end position="146"/>
    </location>
</feature>
<feature type="binding site" evidence="1">
    <location>
        <position position="9"/>
    </location>
    <ligand>
        <name>Mg(2+)</name>
        <dbReference type="ChEBI" id="CHEBI:18420"/>
        <label>1</label>
    </ligand>
</feature>
<feature type="binding site" evidence="1">
    <location>
        <position position="9"/>
    </location>
    <ligand>
        <name>Mg(2+)</name>
        <dbReference type="ChEBI" id="CHEBI:18420"/>
        <label>2</label>
    </ligand>
</feature>
<feature type="binding site" evidence="1">
    <location>
        <position position="47"/>
    </location>
    <ligand>
        <name>Mg(2+)</name>
        <dbReference type="ChEBI" id="CHEBI:18420"/>
        <label>1</label>
    </ligand>
</feature>
<feature type="binding site" evidence="1">
    <location>
        <position position="69"/>
    </location>
    <ligand>
        <name>Mg(2+)</name>
        <dbReference type="ChEBI" id="CHEBI:18420"/>
        <label>1</label>
    </ligand>
</feature>
<feature type="binding site" evidence="1">
    <location>
        <position position="133"/>
    </location>
    <ligand>
        <name>Mg(2+)</name>
        <dbReference type="ChEBI" id="CHEBI:18420"/>
        <label>2</label>
    </ligand>
</feature>
<reference key="1">
    <citation type="journal article" date="2001" name="Science">
        <title>The genome of the natural genetic engineer Agrobacterium tumefaciens C58.</title>
        <authorList>
            <person name="Wood D.W."/>
            <person name="Setubal J.C."/>
            <person name="Kaul R."/>
            <person name="Monks D.E."/>
            <person name="Kitajima J.P."/>
            <person name="Okura V.K."/>
            <person name="Zhou Y."/>
            <person name="Chen L."/>
            <person name="Wood G.E."/>
            <person name="Almeida N.F. Jr."/>
            <person name="Woo L."/>
            <person name="Chen Y."/>
            <person name="Paulsen I.T."/>
            <person name="Eisen J.A."/>
            <person name="Karp P.D."/>
            <person name="Bovee D. Sr."/>
            <person name="Chapman P."/>
            <person name="Clendenning J."/>
            <person name="Deatherage G."/>
            <person name="Gillet W."/>
            <person name="Grant C."/>
            <person name="Kutyavin T."/>
            <person name="Levy R."/>
            <person name="Li M.-J."/>
            <person name="McClelland E."/>
            <person name="Palmieri A."/>
            <person name="Raymond C."/>
            <person name="Rouse G."/>
            <person name="Saenphimmachak C."/>
            <person name="Wu Z."/>
            <person name="Romero P."/>
            <person name="Gordon D."/>
            <person name="Zhang S."/>
            <person name="Yoo H."/>
            <person name="Tao Y."/>
            <person name="Biddle P."/>
            <person name="Jung M."/>
            <person name="Krespan W."/>
            <person name="Perry M."/>
            <person name="Gordon-Kamm B."/>
            <person name="Liao L."/>
            <person name="Kim S."/>
            <person name="Hendrick C."/>
            <person name="Zhao Z.-Y."/>
            <person name="Dolan M."/>
            <person name="Chumley F."/>
            <person name="Tingey S.V."/>
            <person name="Tomb J.-F."/>
            <person name="Gordon M.P."/>
            <person name="Olson M.V."/>
            <person name="Nester E.W."/>
        </authorList>
    </citation>
    <scope>NUCLEOTIDE SEQUENCE [LARGE SCALE GENOMIC DNA]</scope>
    <source>
        <strain>C58 / ATCC 33970</strain>
    </source>
</reference>
<reference key="2">
    <citation type="journal article" date="2001" name="Science">
        <title>Genome sequence of the plant pathogen and biotechnology agent Agrobacterium tumefaciens C58.</title>
        <authorList>
            <person name="Goodner B."/>
            <person name="Hinkle G."/>
            <person name="Gattung S."/>
            <person name="Miller N."/>
            <person name="Blanchard M."/>
            <person name="Qurollo B."/>
            <person name="Goldman B.S."/>
            <person name="Cao Y."/>
            <person name="Askenazi M."/>
            <person name="Halling C."/>
            <person name="Mullin L."/>
            <person name="Houmiel K."/>
            <person name="Gordon J."/>
            <person name="Vaudin M."/>
            <person name="Iartchouk O."/>
            <person name="Epp A."/>
            <person name="Liu F."/>
            <person name="Wollam C."/>
            <person name="Allinger M."/>
            <person name="Doughty D."/>
            <person name="Scott C."/>
            <person name="Lappas C."/>
            <person name="Markelz B."/>
            <person name="Flanagan C."/>
            <person name="Crowell C."/>
            <person name="Gurson J."/>
            <person name="Lomo C."/>
            <person name="Sear C."/>
            <person name="Strub G."/>
            <person name="Cielo C."/>
            <person name="Slater S."/>
        </authorList>
    </citation>
    <scope>NUCLEOTIDE SEQUENCE [LARGE SCALE GENOMIC DNA]</scope>
    <source>
        <strain>C58 / ATCC 33970</strain>
    </source>
</reference>
<gene>
    <name evidence="1" type="primary">rnhA</name>
    <name type="ordered locus">Atu0776</name>
    <name type="ORF">AGR_C_1417</name>
</gene>
<sequence length="146" mass="16261">MKHVDIFTDGACSGNPGPGGWGAVLRYGETEKELSGGEADTTNNRMELLAAISALNALKSPCEVDLYTDSAYVKDGITKWIFGWKKKGWKTADNKPVKNVELWQALEAAQERHKVTLHWVKGHAGHPENERADELARKGMEPFKRR</sequence>
<protein>
    <recommendedName>
        <fullName evidence="1">Ribonuclease H</fullName>
        <shortName evidence="1">RNase H</shortName>
        <ecNumber evidence="1">3.1.26.4</ecNumber>
    </recommendedName>
</protein>
<keyword id="KW-0963">Cytoplasm</keyword>
<keyword id="KW-0255">Endonuclease</keyword>
<keyword id="KW-0378">Hydrolase</keyword>
<keyword id="KW-0460">Magnesium</keyword>
<keyword id="KW-0479">Metal-binding</keyword>
<keyword id="KW-0540">Nuclease</keyword>
<keyword id="KW-1185">Reference proteome</keyword>
<organism>
    <name type="scientific">Agrobacterium fabrum (strain C58 / ATCC 33970)</name>
    <name type="common">Agrobacterium tumefaciens (strain C58)</name>
    <dbReference type="NCBI Taxonomy" id="176299"/>
    <lineage>
        <taxon>Bacteria</taxon>
        <taxon>Pseudomonadati</taxon>
        <taxon>Pseudomonadota</taxon>
        <taxon>Alphaproteobacteria</taxon>
        <taxon>Hyphomicrobiales</taxon>
        <taxon>Rhizobiaceae</taxon>
        <taxon>Rhizobium/Agrobacterium group</taxon>
        <taxon>Agrobacterium</taxon>
        <taxon>Agrobacterium tumefaciens complex</taxon>
    </lineage>
</organism>
<evidence type="ECO:0000255" key="1">
    <source>
        <dbReference type="HAMAP-Rule" id="MF_00042"/>
    </source>
</evidence>
<evidence type="ECO:0000255" key="2">
    <source>
        <dbReference type="PROSITE-ProRule" id="PRU00408"/>
    </source>
</evidence>
<evidence type="ECO:0000256" key="3">
    <source>
        <dbReference type="SAM" id="MobiDB-lite"/>
    </source>
</evidence>